<comment type="function">
    <text evidence="2 7">The TFIID basal transcription factor complex plays a major role in the initiation of RNA polymerase II (Pol II)-dependent transcription. TFIID recognizes and binds promoters with or without a TATA box via its subunit TBP, a TATA-box-binding protein, and promotes assembly of the pre-initiation complex (PIC). The TFIID complex consists of TBP and TBP-associated factors (TAFs), including TAF1, TAF2, TAF3, TAF4, TAF5, TAF6, TAF7, TAF8, TAF9, TAF10, TAF11, TAF12 and TAF13. TAF1 is the largest component and core scaffold of the TFIID complex, involved in nucleating complex assembly. TAF1 forms a promoter DNA binding subcomplex of TFIID, together with TAF7 and TAF2. Contains novel N- and C-terminal Ser/Thr kinase domains which can autophosphorylate or transphosphorylate other transcription factors. Phosphorylates TP53 on 'Thr-55' which leads to MDM2-mediated degradation of TP53. Phosphorylates GTF2A1 and GTF2F1 on Ser residues. Possesses DNA-binding activity (By similarity). Essential for progression of the G1 phase of the cell cycle (PubMed:8163200).</text>
</comment>
<comment type="catalytic activity">
    <reaction>
        <text>L-seryl-[protein] + ATP = O-phospho-L-seryl-[protein] + ADP + H(+)</text>
        <dbReference type="Rhea" id="RHEA:17989"/>
        <dbReference type="Rhea" id="RHEA-COMP:9863"/>
        <dbReference type="Rhea" id="RHEA-COMP:11604"/>
        <dbReference type="ChEBI" id="CHEBI:15378"/>
        <dbReference type="ChEBI" id="CHEBI:29999"/>
        <dbReference type="ChEBI" id="CHEBI:30616"/>
        <dbReference type="ChEBI" id="CHEBI:83421"/>
        <dbReference type="ChEBI" id="CHEBI:456216"/>
        <dbReference type="EC" id="2.7.11.1"/>
    </reaction>
</comment>
<comment type="catalytic activity">
    <reaction>
        <text>L-threonyl-[protein] + ATP = O-phospho-L-threonyl-[protein] + ADP + H(+)</text>
        <dbReference type="Rhea" id="RHEA:46608"/>
        <dbReference type="Rhea" id="RHEA-COMP:11060"/>
        <dbReference type="Rhea" id="RHEA-COMP:11605"/>
        <dbReference type="ChEBI" id="CHEBI:15378"/>
        <dbReference type="ChEBI" id="CHEBI:30013"/>
        <dbReference type="ChEBI" id="CHEBI:30616"/>
        <dbReference type="ChEBI" id="CHEBI:61977"/>
        <dbReference type="ChEBI" id="CHEBI:456216"/>
        <dbReference type="EC" id="2.7.11.1"/>
    </reaction>
</comment>
<comment type="catalytic activity">
    <reaction>
        <text>L-lysyl-[protein] + acetyl-CoA = N(6)-acetyl-L-lysyl-[protein] + CoA + H(+)</text>
        <dbReference type="Rhea" id="RHEA:45948"/>
        <dbReference type="Rhea" id="RHEA-COMP:9752"/>
        <dbReference type="Rhea" id="RHEA-COMP:10731"/>
        <dbReference type="ChEBI" id="CHEBI:15378"/>
        <dbReference type="ChEBI" id="CHEBI:29969"/>
        <dbReference type="ChEBI" id="CHEBI:57287"/>
        <dbReference type="ChEBI" id="CHEBI:57288"/>
        <dbReference type="ChEBI" id="CHEBI:61930"/>
        <dbReference type="EC" id="2.3.1.48"/>
    </reaction>
</comment>
<comment type="cofactor">
    <cofactor evidence="1">
        <name>Mg(2+)</name>
        <dbReference type="ChEBI" id="CHEBI:18420"/>
    </cofactor>
</comment>
<comment type="activity regulation">
    <text evidence="2">Autophosphorylates on Ser residues. Inhibited by retinoblastoma tumor suppressor protein, RB1. Binding to TAF1 or CIITA inhibits the histone acetyltransferase activity.</text>
</comment>
<comment type="subunit">
    <text evidence="2">Component of the TFIID basal transcription factor complex, composed of TATA-box-binding protein TBP, and a number of TBP-associated factors (TAFs), including TAF1, TAF2, TAF3, TAF4, TAF5, TAF6, TAF7, TAF8, TAF9, TAF10, TAF11, TAF12 and TAF13. Interacts with TAF7; the interaction is direct. TAF1, when part of the TFIID complex, interacts with C-terminus of TP53. Part of a TFIID-containing RNA polymerase II pre-initiation complex that is composed of TBP and at least GTF2A1, GTF2A2, GTF2E1, GTF2E2, GTF2F1, GTF2H2, GTF2H3, GTF2H4, GTF2H5, GTF2B, TCEA1, ERCC2, ERCC3, TAF1, TAF2, TAF3, TAF4, TAF5, TAF6, TAF7, TAF8, TAF9, TAF10, TAF11, TAF12 and TAF13. Component of some MLL1/MLL complex, at least composed of the core components KMT2A/MLL1, ASH2L, HCFC1/HCF1, WDR5 and RBBP5, as well as the facultative components BACC1, CHD8, E2F6, HSP70, INO80C, KANSL1, LAS1L, MAX, MCRS1, MGA, KAT8/MOF, PELP1, PHF20, PRP31, RING2, RUVB1/TIP49A, RUVB2/TIP49B, SENP3, TAF1, TAF4, TAF6, TAF7, TAF9 and TEX10. RB1 interacts with the N-terminal domain of TAF1. Interacts with ASF1A and ASF1B. Interacts (via bromo domains) with acetylated lysine residues on the N-terminus of histone H1.4, H2A, H2B, H3 and H4 (in vitro).</text>
</comment>
<comment type="subcellular location">
    <subcellularLocation>
        <location evidence="2">Nucleus</location>
    </subcellularLocation>
</comment>
<comment type="domain">
    <text evidence="2">The Bromo domain mediates interaction with histones that have acetylated lysine residues at specific positions. The second domain also recognizes and binds histones that are butyrylated and crotonylated.</text>
</comment>
<comment type="PTM">
    <text evidence="2">Phosphorylated by casein kinase II in vitro.</text>
</comment>
<comment type="similarity">
    <text evidence="9">Belongs to the TAF1 family.</text>
</comment>
<accession>Q60544</accession>
<feature type="chain" id="PRO_0000278523" description="Transcription initiation factor TFIID subunit 1">
    <location>
        <begin position="1"/>
        <end position="1865"/>
    </location>
</feature>
<feature type="domain" description="Protein kinase 1">
    <location>
        <begin position="1"/>
        <end position="409"/>
    </location>
</feature>
<feature type="domain" description="Bromo 1" evidence="5">
    <location>
        <begin position="1371"/>
        <end position="1479"/>
    </location>
</feature>
<feature type="domain" description="Protein kinase 2">
    <location>
        <begin position="1420"/>
        <end position="1865"/>
    </location>
</feature>
<feature type="domain" description="Bromo 2" evidence="5">
    <location>
        <begin position="1493"/>
        <end position="1602"/>
    </location>
</feature>
<feature type="DNA-binding region" description="HMG box" evidence="1">
    <location>
        <begin position="1190"/>
        <end position="1268"/>
    </location>
</feature>
<feature type="region of interest" description="Disordered" evidence="6">
    <location>
        <begin position="1"/>
        <end position="27"/>
    </location>
</feature>
<feature type="region of interest" description="Disordered" evidence="6">
    <location>
        <begin position="144"/>
        <end position="199"/>
    </location>
</feature>
<feature type="region of interest" description="Disordered" evidence="6">
    <location>
        <begin position="509"/>
        <end position="530"/>
    </location>
</feature>
<feature type="region of interest" description="Histone acetyltransferase (HAT)" evidence="1">
    <location>
        <begin position="512"/>
        <end position="971"/>
    </location>
</feature>
<feature type="region of interest" description="Disordered" evidence="6">
    <location>
        <begin position="964"/>
        <end position="983"/>
    </location>
</feature>
<feature type="region of interest" description="Disordered" evidence="6">
    <location>
        <begin position="1228"/>
        <end position="1252"/>
    </location>
</feature>
<feature type="region of interest" description="Interaction with ASF1A and ASF1B" evidence="1">
    <location>
        <begin position="1337"/>
        <end position="1624"/>
    </location>
</feature>
<feature type="region of interest" description="Disordered" evidence="6">
    <location>
        <begin position="1625"/>
        <end position="1865"/>
    </location>
</feature>
<feature type="short sequence motif" description="Nuclear localization signal" evidence="4">
    <location>
        <begin position="1346"/>
        <end position="1353"/>
    </location>
</feature>
<feature type="compositionally biased region" description="Pro residues" evidence="6">
    <location>
        <begin position="151"/>
        <end position="160"/>
    </location>
</feature>
<feature type="compositionally biased region" description="Basic and acidic residues" evidence="6">
    <location>
        <begin position="161"/>
        <end position="176"/>
    </location>
</feature>
<feature type="compositionally biased region" description="Basic and acidic residues" evidence="6">
    <location>
        <begin position="969"/>
        <end position="978"/>
    </location>
</feature>
<feature type="compositionally biased region" description="Basic and acidic residues" evidence="6">
    <location>
        <begin position="1228"/>
        <end position="1244"/>
    </location>
</feature>
<feature type="compositionally biased region" description="Pro residues" evidence="6">
    <location>
        <begin position="1633"/>
        <end position="1642"/>
    </location>
</feature>
<feature type="compositionally biased region" description="Polar residues" evidence="6">
    <location>
        <begin position="1646"/>
        <end position="1682"/>
    </location>
</feature>
<feature type="compositionally biased region" description="Acidic residues" evidence="6">
    <location>
        <begin position="1683"/>
        <end position="1697"/>
    </location>
</feature>
<feature type="compositionally biased region" description="Acidic residues" evidence="6">
    <location>
        <begin position="1715"/>
        <end position="1730"/>
    </location>
</feature>
<feature type="compositionally biased region" description="Low complexity" evidence="6">
    <location>
        <begin position="1739"/>
        <end position="1751"/>
    </location>
</feature>
<feature type="compositionally biased region" description="Polar residues" evidence="6">
    <location>
        <begin position="1804"/>
        <end position="1814"/>
    </location>
</feature>
<feature type="compositionally biased region" description="Acidic residues" evidence="6">
    <location>
        <begin position="1820"/>
        <end position="1829"/>
    </location>
</feature>
<feature type="compositionally biased region" description="Polar residues" evidence="6">
    <location>
        <begin position="1832"/>
        <end position="1841"/>
    </location>
</feature>
<feature type="modified residue" description="Phosphoserine; by autocatalysis" evidence="2">
    <location>
        <position position="131"/>
    </location>
</feature>
<feature type="modified residue" description="Phosphoserine; by autocatalysis" evidence="2">
    <location>
        <position position="302"/>
    </location>
</feature>
<feature type="modified residue" description="N6-acetyllysine" evidence="3">
    <location>
        <position position="539"/>
    </location>
</feature>
<feature type="modified residue" description="Phosphoserine" evidence="3">
    <location>
        <position position="1664"/>
    </location>
</feature>
<feature type="modified residue" description="Phosphoserine" evidence="3">
    <location>
        <position position="1667"/>
    </location>
</feature>
<feature type="modified residue" description="Phosphoserine" evidence="3">
    <location>
        <position position="1773"/>
    </location>
</feature>
<feature type="modified residue" description="Phosphoserine" evidence="3">
    <location>
        <position position="1776"/>
    </location>
</feature>
<feature type="modified residue" description="Phosphoserine" evidence="3">
    <location>
        <position position="1794"/>
    </location>
</feature>
<feature type="modified residue" description="Phosphoserine" evidence="2">
    <location>
        <position position="1821"/>
    </location>
</feature>
<feature type="cross-link" description="Glycyl lysine isopeptide (Lys-Gly) (interchain with G-Cter in SUMO2)" evidence="2">
    <location>
        <position position="544"/>
    </location>
</feature>
<feature type="cross-link" description="Glycyl lysine isopeptide (Lys-Gly) (interchain with G-Cter in SUMO2)" evidence="2">
    <location>
        <position position="557"/>
    </location>
</feature>
<dbReference type="EC" id="2.3.1.48"/>
<dbReference type="EC" id="2.7.11.1"/>
<dbReference type="EMBL" id="D26114">
    <property type="protein sequence ID" value="BAA05110.1"/>
    <property type="molecule type" value="mRNA"/>
</dbReference>
<dbReference type="PIR" id="I48155">
    <property type="entry name" value="I48155"/>
</dbReference>
<dbReference type="RefSeq" id="NP_001268498.1">
    <property type="nucleotide sequence ID" value="NM_001281569.1"/>
</dbReference>
<dbReference type="SMR" id="Q60544"/>
<dbReference type="STRING" id="10036.ENSMAUP00000020732"/>
<dbReference type="GeneID" id="101838159"/>
<dbReference type="KEGG" id="maua:101838159"/>
<dbReference type="CTD" id="6872"/>
<dbReference type="OrthoDB" id="5752at2759"/>
<dbReference type="Proteomes" id="UP000189706">
    <property type="component" value="Unplaced"/>
</dbReference>
<dbReference type="GO" id="GO:0071339">
    <property type="term" value="C:MLL1 complex"/>
    <property type="evidence" value="ECO:0000250"/>
    <property type="project" value="UniProtKB"/>
</dbReference>
<dbReference type="GO" id="GO:0005669">
    <property type="term" value="C:transcription factor TFIID complex"/>
    <property type="evidence" value="ECO:0000250"/>
    <property type="project" value="UniProtKB"/>
</dbReference>
<dbReference type="GO" id="GO:0005524">
    <property type="term" value="F:ATP binding"/>
    <property type="evidence" value="ECO:0007669"/>
    <property type="project" value="UniProtKB-KW"/>
</dbReference>
<dbReference type="GO" id="GO:0003677">
    <property type="term" value="F:DNA binding"/>
    <property type="evidence" value="ECO:0007669"/>
    <property type="project" value="UniProtKB-KW"/>
</dbReference>
<dbReference type="GO" id="GO:0004402">
    <property type="term" value="F:histone acetyltransferase activity"/>
    <property type="evidence" value="ECO:0000250"/>
    <property type="project" value="UniProtKB"/>
</dbReference>
<dbReference type="GO" id="GO:0106310">
    <property type="term" value="F:protein serine kinase activity"/>
    <property type="evidence" value="ECO:0007669"/>
    <property type="project" value="RHEA"/>
</dbReference>
<dbReference type="GO" id="GO:0004674">
    <property type="term" value="F:protein serine/threonine kinase activity"/>
    <property type="evidence" value="ECO:0000250"/>
    <property type="project" value="UniProtKB"/>
</dbReference>
<dbReference type="GO" id="GO:0016251">
    <property type="term" value="F:RNA polymerase II general transcription initiation factor activity"/>
    <property type="evidence" value="ECO:0000316"/>
    <property type="project" value="ParkinsonsUK-UCL"/>
</dbReference>
<dbReference type="GO" id="GO:0017025">
    <property type="term" value="F:TBP-class protein binding"/>
    <property type="evidence" value="ECO:0007669"/>
    <property type="project" value="InterPro"/>
</dbReference>
<dbReference type="GO" id="GO:0045944">
    <property type="term" value="P:positive regulation of transcription by RNA polymerase II"/>
    <property type="evidence" value="ECO:0000315"/>
    <property type="project" value="BHF-UCL"/>
</dbReference>
<dbReference type="GO" id="GO:0051123">
    <property type="term" value="P:RNA polymerase II preinitiation complex assembly"/>
    <property type="evidence" value="ECO:0007669"/>
    <property type="project" value="TreeGrafter"/>
</dbReference>
<dbReference type="GO" id="GO:0006367">
    <property type="term" value="P:transcription initiation at RNA polymerase II promoter"/>
    <property type="evidence" value="ECO:0000316"/>
    <property type="project" value="ParkinsonsUK-UCL"/>
</dbReference>
<dbReference type="CDD" id="cd05511">
    <property type="entry name" value="Bromo_TFIID"/>
    <property type="match status" value="2"/>
</dbReference>
<dbReference type="FunFam" id="1.10.1100.10:FF:000001">
    <property type="entry name" value="Transcription initiation factor TFIID subunit"/>
    <property type="match status" value="1"/>
</dbReference>
<dbReference type="FunFam" id="1.20.920.10:FF:000019">
    <property type="entry name" value="Transcription initiation factor TFIID subunit"/>
    <property type="match status" value="1"/>
</dbReference>
<dbReference type="FunFam" id="1.20.920.10:FF:000020">
    <property type="entry name" value="Transcription initiation factor TFIID subunit"/>
    <property type="match status" value="1"/>
</dbReference>
<dbReference type="Gene3D" id="1.20.920.10">
    <property type="entry name" value="Bromodomain-like"/>
    <property type="match status" value="2"/>
</dbReference>
<dbReference type="Gene3D" id="1.10.1100.10">
    <property type="entry name" value="TAFII-230 TBP-binding domain"/>
    <property type="match status" value="1"/>
</dbReference>
<dbReference type="InterPro" id="IPR001487">
    <property type="entry name" value="Bromodomain"/>
</dbReference>
<dbReference type="InterPro" id="IPR036427">
    <property type="entry name" value="Bromodomain-like_sf"/>
</dbReference>
<dbReference type="InterPro" id="IPR018359">
    <property type="entry name" value="Bromodomain_CS"/>
</dbReference>
<dbReference type="InterPro" id="IPR040240">
    <property type="entry name" value="TAF1"/>
</dbReference>
<dbReference type="InterPro" id="IPR011177">
    <property type="entry name" value="TAF1_animal"/>
</dbReference>
<dbReference type="InterPro" id="IPR022591">
    <property type="entry name" value="TAF1_HAT_dom"/>
</dbReference>
<dbReference type="InterPro" id="IPR009067">
    <property type="entry name" value="TAF_II_230-bd"/>
</dbReference>
<dbReference type="InterPro" id="IPR036741">
    <property type="entry name" value="TAFII-230_TBP-bd_sf"/>
</dbReference>
<dbReference type="InterPro" id="IPR041670">
    <property type="entry name" value="Znf-CCHC_6"/>
</dbReference>
<dbReference type="PANTHER" id="PTHR13900">
    <property type="entry name" value="TRANSCRIPTION INITIATION FACTOR TFIID"/>
    <property type="match status" value="1"/>
</dbReference>
<dbReference type="PANTHER" id="PTHR13900:SF0">
    <property type="entry name" value="TRANSCRIPTION INITIATION FACTOR TFIID SUBUNIT 1"/>
    <property type="match status" value="1"/>
</dbReference>
<dbReference type="Pfam" id="PF00439">
    <property type="entry name" value="Bromodomain"/>
    <property type="match status" value="2"/>
</dbReference>
<dbReference type="Pfam" id="PF12157">
    <property type="entry name" value="DUF3591"/>
    <property type="match status" value="1"/>
</dbReference>
<dbReference type="Pfam" id="PF09247">
    <property type="entry name" value="TBP-binding"/>
    <property type="match status" value="1"/>
</dbReference>
<dbReference type="Pfam" id="PF15288">
    <property type="entry name" value="zf-CCHC_6"/>
    <property type="match status" value="1"/>
</dbReference>
<dbReference type="PIRSF" id="PIRSF003047">
    <property type="entry name" value="TAF1_animal"/>
    <property type="match status" value="1"/>
</dbReference>
<dbReference type="PRINTS" id="PR00503">
    <property type="entry name" value="BROMODOMAIN"/>
</dbReference>
<dbReference type="SMART" id="SM00297">
    <property type="entry name" value="BROMO"/>
    <property type="match status" value="2"/>
</dbReference>
<dbReference type="SUPFAM" id="SSF47370">
    <property type="entry name" value="Bromodomain"/>
    <property type="match status" value="2"/>
</dbReference>
<dbReference type="SUPFAM" id="SSF47055">
    <property type="entry name" value="TAF(II)230 TBP-binding fragment"/>
    <property type="match status" value="1"/>
</dbReference>
<dbReference type="PROSITE" id="PS00633">
    <property type="entry name" value="BROMODOMAIN_1"/>
    <property type="match status" value="2"/>
</dbReference>
<dbReference type="PROSITE" id="PS50014">
    <property type="entry name" value="BROMODOMAIN_2"/>
    <property type="match status" value="2"/>
</dbReference>
<reference key="1">
    <citation type="journal article" date="1994" name="Gene">
        <title>The CCG1/TAFII250 gene is mutated in thermosensitive G1 mutants of the BHK21 cell line derived from golden hamster.</title>
        <authorList>
            <person name="Hayashida T."/>
            <person name="Sekiguchi T."/>
            <person name="Noguchi E."/>
            <person name="Sunamoto H."/>
            <person name="Ohba T."/>
            <person name="Nishimoto T."/>
        </authorList>
    </citation>
    <scope>NUCLEOTIDE SEQUENCE [MRNA]</scope>
    <scope>FUNCTION</scope>
</reference>
<organism>
    <name type="scientific">Mesocricetus auratus</name>
    <name type="common">Golden hamster</name>
    <dbReference type="NCBI Taxonomy" id="10036"/>
    <lineage>
        <taxon>Eukaryota</taxon>
        <taxon>Metazoa</taxon>
        <taxon>Chordata</taxon>
        <taxon>Craniata</taxon>
        <taxon>Vertebrata</taxon>
        <taxon>Euteleostomi</taxon>
        <taxon>Mammalia</taxon>
        <taxon>Eutheria</taxon>
        <taxon>Euarchontoglires</taxon>
        <taxon>Glires</taxon>
        <taxon>Rodentia</taxon>
        <taxon>Myomorpha</taxon>
        <taxon>Muroidea</taxon>
        <taxon>Cricetidae</taxon>
        <taxon>Cricetinae</taxon>
        <taxon>Mesocricetus</taxon>
    </lineage>
</organism>
<gene>
    <name evidence="2" type="primary">TAF1</name>
    <name type="synonym">CCG1</name>
</gene>
<proteinExistence type="evidence at transcript level"/>
<name>TAF1_MESAU</name>
<keyword id="KW-0007">Acetylation</keyword>
<keyword id="KW-0012">Acyltransferase</keyword>
<keyword id="KW-0067">ATP-binding</keyword>
<keyword id="KW-0103">Bromodomain</keyword>
<keyword id="KW-0131">Cell cycle</keyword>
<keyword id="KW-0238">DNA-binding</keyword>
<keyword id="KW-1017">Isopeptide bond</keyword>
<keyword id="KW-0418">Kinase</keyword>
<keyword id="KW-0547">Nucleotide-binding</keyword>
<keyword id="KW-0539">Nucleus</keyword>
<keyword id="KW-0597">Phosphoprotein</keyword>
<keyword id="KW-1185">Reference proteome</keyword>
<keyword id="KW-0677">Repeat</keyword>
<keyword id="KW-0723">Serine/threonine-protein kinase</keyword>
<keyword id="KW-0804">Transcription</keyword>
<keyword id="KW-0805">Transcription regulation</keyword>
<keyword id="KW-0808">Transferase</keyword>
<keyword id="KW-0832">Ubl conjugation</keyword>
<protein>
    <recommendedName>
        <fullName evidence="2">Transcription initiation factor TFIID subunit 1</fullName>
        <ecNumber>2.3.1.48</ecNumber>
        <ecNumber>2.7.11.1</ecNumber>
    </recommendedName>
    <alternativeName>
        <fullName>Cell cycle gene 1 protein</fullName>
    </alternativeName>
    <alternativeName>
        <fullName>TBP-associated factor 250 kDa</fullName>
        <shortName>p250</shortName>
    </alternativeName>
    <alternativeName>
        <fullName>Transcription initiation factor TFIID 250 kDa subunit</fullName>
        <shortName>TAF(II)250</shortName>
        <shortName>TAFII-250</shortName>
        <shortName evidence="8">TAFII250</shortName>
    </alternativeName>
</protein>
<sequence>MLLPATGASRSAAIMSDTDSDEDSSGGGPFSLTGFLFGNINGAGQLEGESVLDDECKKHLAGLGALGLGSLITELTANEELAGTDGALVNDEGWIRSREDAVDYSDINEVAEDESRRYQQTMGSLQPLCHSADYDEDDYDADCEDIDCKLMPPPPPPPGPVKKEKDQDGLTGEKVDFSSSSDSESEMGPQEAAQAESKDGKLTLPLAGIMQHDATKLLPSVTELFPEFRPGKVLRFLRLFGPGKNVPSVWRSARRKRKKKHREPIQEEQIQEEECSVELEVNQKSLWNYDYAPPPPPEQCLSDDEITMMAPVESKFSQSTGDTDKVMDTKPRVAEWRYGPARLWYDMLGVPEDGSGFDYGFKMRKTEHEPAIKCKMMTKLRKLEESNGIDLLADENFLMVTQLHWEDDIIWDGEDVKHKGTKPQRASLAGWLPSSMTRNAMAYNVQQGFAATLDDDKPWYSIFPIDNEDLVYGRWEDNIIWDAQAMPRILEPPVLTLDPNDENLILEIPDEKEEATSNSPSKENKKESSLKKSRILLGKTGVIKEEPQQNMSQPEVKDPWNLSNDEYYYPKQQGLRGTFGGNIIQHSIPAVELRQPFFPTHMGPIKLRQFHRPPLKKYSFGALSQPGPHSVQPLLKHIKKKAKMREQERQASGGGEMFFMRTPQDLTGKDGDLILAEYSEENGPLMMQVGMATKIKNYYKRKPGKDPGAPDCKYGETVYCHTSPFLGSLHPGQLLQAFENNLFRAPIYLHKMPETDFLIIRTRQGYYIRELVDIFVVGQQCPLFEVPGPNSKRANTHIRDFLQVFIYRLFWKSKDRPRRIRMEDIKKAFPSHSESSIRKRLKLCADFKRTGMDSNWWVLKSDFRLPTEEEIRAMVSPEQCCAYYSMIAAEQRLKDAGYGEKSFFAPEEENEEDFQMKIDDEVRTAPWNTTRAFIAAMKGKCLLEVTGVADPTGCGEGFSYVKIPNKPTQQKDDKEPQPVKKTVTGTDADLRRLSLKNAKQLLRKFGVPEEEIKKLSRWEVIDVVRTMSTEQARSGEGPMSKFARGSRFSVAEHQERYKEECQRIFDLQNKVLSSTEVLSTDTDSSSAEDSDFEEMGKNIENMLQNKKTSSQLSREREEQERKELQRMLLAAGSASAGNNHRDDDTASVTSLNSSATGRCLKIYRTFRDEEGKEYVRCETVRKPAVIDAYVRIRTTKDEEFIRKFALFDEQHREEMRKERRRIQEQLRRLKRNQEKEKLKGPPEKKPKKMKERPDLKLKCGACGAIGHMRTNKFCPLYYQTNAPPSNPVAMTEEQEEELEKTVIHNDNEELIKVEGTKIVLGKQLIESADEVRRKSLVLKFPKQQLPPKKKRRVGTTVHCDYLNRPHKSIHRRRTDPMVTLSSILESIINDMRDLPNTYPFHTPVNAKVVKDYYKIITRPMDLQTLRENVRKRLYPSREEFREHLELIVKNSATYNGPKHSLTQISQSMLDLCDEKLKEKEDKLARLEKAINPLLDDDDQVAFSFILDNIVTQKMMAVPDSWPFHHPVNKKFVPDYYKVIVSPMDLETIRKNISKHKYQSRESFLDDVNLILANSVKYNGSESQYTKTAQEIVNVCYQTLTEYDEHLTQLEKDICTAKEAALEEAELESLDPMTPGPYTPQPPDLYDNSTSLSVSRDASVYQDESNMSVLDIPSATSEKQLTQEGEDGDGDLADEEEGTVQQPQASVLYEDLLMSEGEDDEEDAGSDEEGDNPFSAIQLSESGSDSDVGSGSIRPKQPRVLQENTRMGMENEESMMSYEGDGGEVSRGLEDSNISYGSYEEPDPKSNTQDTSFSSIGGYEVSEEEEDEEEQRSGPSVLSQVHLSEDEEDSEDFHSIAGDSDMDSDE</sequence>
<evidence type="ECO:0000250" key="1"/>
<evidence type="ECO:0000250" key="2">
    <source>
        <dbReference type="UniProtKB" id="P21675"/>
    </source>
</evidence>
<evidence type="ECO:0000250" key="3">
    <source>
        <dbReference type="UniProtKB" id="Q80UV9"/>
    </source>
</evidence>
<evidence type="ECO:0000255" key="4"/>
<evidence type="ECO:0000255" key="5">
    <source>
        <dbReference type="PROSITE-ProRule" id="PRU00035"/>
    </source>
</evidence>
<evidence type="ECO:0000256" key="6">
    <source>
        <dbReference type="SAM" id="MobiDB-lite"/>
    </source>
</evidence>
<evidence type="ECO:0000269" key="7">
    <source>
    </source>
</evidence>
<evidence type="ECO:0000303" key="8">
    <source>
    </source>
</evidence>
<evidence type="ECO:0000305" key="9"/>